<accession>Q8U378</accession>
<gene>
    <name type="ordered locus">PF0593</name>
</gene>
<organism>
    <name type="scientific">Pyrococcus furiosus (strain ATCC 43587 / DSM 3638 / JCM 8422 / Vc1)</name>
    <dbReference type="NCBI Taxonomy" id="186497"/>
    <lineage>
        <taxon>Archaea</taxon>
        <taxon>Methanobacteriati</taxon>
        <taxon>Methanobacteriota</taxon>
        <taxon>Thermococci</taxon>
        <taxon>Thermococcales</taxon>
        <taxon>Thermococcaceae</taxon>
        <taxon>Pyrococcus</taxon>
    </lineage>
</organism>
<reference key="1">
    <citation type="journal article" date="1999" name="Genetics">
        <title>Divergence of the hyperthermophilic archaea Pyrococcus furiosus and P. horikoshii inferred from complete genomic sequences.</title>
        <authorList>
            <person name="Maeder D.L."/>
            <person name="Weiss R.B."/>
            <person name="Dunn D.M."/>
            <person name="Cherry J.L."/>
            <person name="Gonzalez J.M."/>
            <person name="DiRuggiero J."/>
            <person name="Robb F.T."/>
        </authorList>
    </citation>
    <scope>NUCLEOTIDE SEQUENCE [LARGE SCALE GENOMIC DNA]</scope>
    <source>
        <strain>ATCC 43587 / DSM 3638 / JCM 8422 / Vc1</strain>
    </source>
</reference>
<dbReference type="EMBL" id="AE009950">
    <property type="protein sequence ID" value="AAL80717.1"/>
    <property type="molecule type" value="Genomic_DNA"/>
</dbReference>
<dbReference type="RefSeq" id="WP_011011712.1">
    <property type="nucleotide sequence ID" value="NZ_CP023154.1"/>
</dbReference>
<dbReference type="STRING" id="186497.PF0593"/>
<dbReference type="PaxDb" id="186497-PF0593"/>
<dbReference type="KEGG" id="pfu:PF0593"/>
<dbReference type="PATRIC" id="fig|186497.12.peg.622"/>
<dbReference type="eggNOG" id="arCOG00969">
    <property type="taxonomic scope" value="Archaea"/>
</dbReference>
<dbReference type="HOGENOM" id="CLU_079268_0_0_2"/>
<dbReference type="OrthoDB" id="21331at2157"/>
<dbReference type="PhylomeDB" id="Q8U378"/>
<dbReference type="Proteomes" id="UP000001013">
    <property type="component" value="Chromosome"/>
</dbReference>
<dbReference type="Gene3D" id="3.60.15.10">
    <property type="entry name" value="Ribonuclease Z/Hydroxyacylglutathione hydrolase-like"/>
    <property type="match status" value="1"/>
</dbReference>
<dbReference type="HAMAP" id="MF_01406">
    <property type="entry name" value="UPF0282"/>
    <property type="match status" value="1"/>
</dbReference>
<dbReference type="InterPro" id="IPR001279">
    <property type="entry name" value="Metallo-B-lactamas"/>
</dbReference>
<dbReference type="InterPro" id="IPR036866">
    <property type="entry name" value="RibonucZ/Hydroxyglut_hydro"/>
</dbReference>
<dbReference type="InterPro" id="IPR050114">
    <property type="entry name" value="UPF0173_UPF0282_UlaG_hydrolase"/>
</dbReference>
<dbReference type="InterPro" id="IPR014426">
    <property type="entry name" value="UPF0282_hydrls"/>
</dbReference>
<dbReference type="NCBIfam" id="NF003290">
    <property type="entry name" value="PRK04286.1-6"/>
    <property type="match status" value="1"/>
</dbReference>
<dbReference type="PANTHER" id="PTHR43546">
    <property type="entry name" value="UPF0173 METAL-DEPENDENT HYDROLASE MJ1163-RELATED"/>
    <property type="match status" value="1"/>
</dbReference>
<dbReference type="PANTHER" id="PTHR43546:SF4">
    <property type="entry name" value="UPF0282 PROTEIN MJ1629"/>
    <property type="match status" value="1"/>
</dbReference>
<dbReference type="Pfam" id="PF12706">
    <property type="entry name" value="Lactamase_B_2"/>
    <property type="match status" value="1"/>
</dbReference>
<dbReference type="PIRSF" id="PIRSF004944">
    <property type="entry name" value="UCP004944_hydrls"/>
    <property type="match status" value="1"/>
</dbReference>
<dbReference type="SUPFAM" id="SSF56281">
    <property type="entry name" value="Metallo-hydrolase/oxidoreductase"/>
    <property type="match status" value="1"/>
</dbReference>
<sequence length="310" mass="34921">MKIIPIASESLGVRSLAVFVKVGKRGILIDPGAALGPKRYSLSPANSEMAALQLARSKIQEFAKKADVITISHYHYDHHTPFFEGIYESSSPEIAKELYSGKILLIKHPTQNINASQKRRAHEFLKNVEGIAKKIEYGDSKTFDFGDFKIEFSPPVPHGREGSKLGFVVMVLIDDGKKSVIHASDTQLINEKAVKWIIEKNPDLLIAGGPPTYLTHRVGNVRDIGRELINRIINETNAELIIDHHIVRDKGYEEFFNSLDKRPLTFAEFLGRENAPLEAYRKELHEFEKGKDVELPKGIVKFLKELGEQK</sequence>
<proteinExistence type="inferred from homology"/>
<keyword id="KW-1185">Reference proteome</keyword>
<feature type="chain" id="PRO_0000057636" description="UPF0282 protein PF0593">
    <location>
        <begin position="1"/>
        <end position="310"/>
    </location>
</feature>
<comment type="similarity">
    <text evidence="1">Belongs to the UPF0282 family.</text>
</comment>
<protein>
    <recommendedName>
        <fullName evidence="1">UPF0282 protein PF0593</fullName>
    </recommendedName>
</protein>
<name>Y593_PYRFU</name>
<evidence type="ECO:0000255" key="1">
    <source>
        <dbReference type="HAMAP-Rule" id="MF_01406"/>
    </source>
</evidence>